<gene>
    <name evidence="1" type="primary">mdoC</name>
    <name evidence="1" type="synonym">opgC</name>
    <name type="ordered locus">SCH_1096</name>
</gene>
<feature type="chain" id="PRO_0000218052" description="Glucans biosynthesis protein C">
    <location>
        <begin position="1"/>
        <end position="384"/>
    </location>
</feature>
<feature type="transmembrane region" description="Helical" evidence="1">
    <location>
        <begin position="17"/>
        <end position="37"/>
    </location>
</feature>
<feature type="transmembrane region" description="Helical" evidence="1">
    <location>
        <begin position="54"/>
        <end position="74"/>
    </location>
</feature>
<feature type="transmembrane region" description="Helical" evidence="1">
    <location>
        <begin position="91"/>
        <end position="111"/>
    </location>
</feature>
<feature type="transmembrane region" description="Helical" evidence="1">
    <location>
        <begin position="140"/>
        <end position="160"/>
    </location>
</feature>
<feature type="transmembrane region" description="Helical" evidence="1">
    <location>
        <begin position="173"/>
        <end position="193"/>
    </location>
</feature>
<feature type="transmembrane region" description="Helical" evidence="1">
    <location>
        <begin position="212"/>
        <end position="232"/>
    </location>
</feature>
<feature type="transmembrane region" description="Helical" evidence="1">
    <location>
        <begin position="240"/>
        <end position="260"/>
    </location>
</feature>
<feature type="transmembrane region" description="Helical" evidence="1">
    <location>
        <begin position="274"/>
        <end position="294"/>
    </location>
</feature>
<feature type="transmembrane region" description="Helical" evidence="1">
    <location>
        <begin position="311"/>
        <end position="331"/>
    </location>
</feature>
<feature type="transmembrane region" description="Helical" evidence="1">
    <location>
        <begin position="338"/>
        <end position="358"/>
    </location>
</feature>
<reference key="1">
    <citation type="journal article" date="2005" name="Nucleic Acids Res.">
        <title>The genome sequence of Salmonella enterica serovar Choleraesuis, a highly invasive and resistant zoonotic pathogen.</title>
        <authorList>
            <person name="Chiu C.-H."/>
            <person name="Tang P."/>
            <person name="Chu C."/>
            <person name="Hu S."/>
            <person name="Bao Q."/>
            <person name="Yu J."/>
            <person name="Chou Y.-Y."/>
            <person name="Wang H.-S."/>
            <person name="Lee Y.-S."/>
        </authorList>
    </citation>
    <scope>NUCLEOTIDE SEQUENCE [LARGE SCALE GENOMIC DNA]</scope>
    <source>
        <strain>SC-B67</strain>
    </source>
</reference>
<organism>
    <name type="scientific">Salmonella choleraesuis (strain SC-B67)</name>
    <dbReference type="NCBI Taxonomy" id="321314"/>
    <lineage>
        <taxon>Bacteria</taxon>
        <taxon>Pseudomonadati</taxon>
        <taxon>Pseudomonadota</taxon>
        <taxon>Gammaproteobacteria</taxon>
        <taxon>Enterobacterales</taxon>
        <taxon>Enterobacteriaceae</taxon>
        <taxon>Salmonella</taxon>
    </lineage>
</organism>
<name>OPGC_SALCH</name>
<proteinExistence type="inferred from homology"/>
<sequence>MSSVPAPREYFLDSIRAWLMLLGIPFHISLIYSTHSWHVNSATPSWWLTLFNDFIHAFRMQVFFVISGYFSYMLFLRYPLKRWWKVRVERVGIPMLTAIPLLTLPQFILLQYVKEKTENWPTLSAYEKYNTLAWELISHLWFLLVLVILTTVSIGIFTWFQKRQETSKPRPAAISLVRLSLIFFLLGMAYAAIRRIIFIVYPAILSDGMFNFIVMQTLFYVPFFILGALAFIHPDLKARFTTPSRGCTLGAAVAFIAYLLNQRYGSGDAWMYETESVITMVMGLWMVNVVFSLGHRLLNFQSARVTYFVNASLFIYLVHHPLTLFFGAYITPHISSNLIGFLCGLIFVMGIALILYEIHLRIPLLKFLFSGKPPVKQESRAAIG</sequence>
<comment type="function">
    <text evidence="1">Necessary for the succinyl substitution of periplasmic glucans. Could catalyze the transfer of succinyl residues from the cytoplasmic side of the membrane to the nascent glucan backbones on the periplasmic side of the membrane.</text>
</comment>
<comment type="pathway">
    <text evidence="1">Glycan metabolism; osmoregulated periplasmic glucan (OPG) biosynthesis.</text>
</comment>
<comment type="subcellular location">
    <subcellularLocation>
        <location evidence="1">Cell membrane</location>
        <topology evidence="1">Multi-pass membrane protein</topology>
    </subcellularLocation>
</comment>
<comment type="similarity">
    <text evidence="1">Belongs to the acyltransferase 3 family. OpgC subfamily.</text>
</comment>
<accession>Q57QK9</accession>
<dbReference type="EC" id="2.1.-.-" evidence="1"/>
<dbReference type="EMBL" id="AE017220">
    <property type="protein sequence ID" value="AAX65002.1"/>
    <property type="molecule type" value="Genomic_DNA"/>
</dbReference>
<dbReference type="RefSeq" id="WP_000100071.1">
    <property type="nucleotide sequence ID" value="NC_006905.1"/>
</dbReference>
<dbReference type="KEGG" id="sec:SCH_1096"/>
<dbReference type="HOGENOM" id="CLU_036182_2_0_6"/>
<dbReference type="UniPathway" id="UPA00637"/>
<dbReference type="Proteomes" id="UP000000538">
    <property type="component" value="Chromosome"/>
</dbReference>
<dbReference type="GO" id="GO:0005886">
    <property type="term" value="C:plasma membrane"/>
    <property type="evidence" value="ECO:0007669"/>
    <property type="project" value="UniProtKB-SubCell"/>
</dbReference>
<dbReference type="GO" id="GO:0016747">
    <property type="term" value="F:acyltransferase activity, transferring groups other than amino-acyl groups"/>
    <property type="evidence" value="ECO:0007669"/>
    <property type="project" value="InterPro"/>
</dbReference>
<dbReference type="GO" id="GO:0016741">
    <property type="term" value="F:transferase activity, transferring one-carbon groups"/>
    <property type="evidence" value="ECO:0007669"/>
    <property type="project" value="UniProtKB-UniRule"/>
</dbReference>
<dbReference type="GO" id="GO:0009250">
    <property type="term" value="P:glucan biosynthetic process"/>
    <property type="evidence" value="ECO:0007669"/>
    <property type="project" value="UniProtKB-UniRule"/>
</dbReference>
<dbReference type="HAMAP" id="MF_01066">
    <property type="entry name" value="MdoC_OpgC"/>
    <property type="match status" value="1"/>
</dbReference>
<dbReference type="InterPro" id="IPR002656">
    <property type="entry name" value="Acyl_transf_3_dom"/>
</dbReference>
<dbReference type="InterPro" id="IPR050623">
    <property type="entry name" value="Glucan_succinyl_AcylTrfase"/>
</dbReference>
<dbReference type="InterPro" id="IPR023723">
    <property type="entry name" value="Glucans_biosynth_C"/>
</dbReference>
<dbReference type="NCBIfam" id="NF003014">
    <property type="entry name" value="PRK03854.1"/>
    <property type="match status" value="1"/>
</dbReference>
<dbReference type="PANTHER" id="PTHR36927">
    <property type="entry name" value="BLR4337 PROTEIN"/>
    <property type="match status" value="1"/>
</dbReference>
<dbReference type="PANTHER" id="PTHR36927:SF3">
    <property type="entry name" value="GLUCANS BIOSYNTHESIS PROTEIN C"/>
    <property type="match status" value="1"/>
</dbReference>
<dbReference type="Pfam" id="PF01757">
    <property type="entry name" value="Acyl_transf_3"/>
    <property type="match status" value="1"/>
</dbReference>
<protein>
    <recommendedName>
        <fullName evidence="1">Glucans biosynthesis protein C</fullName>
        <ecNumber evidence="1">2.1.-.-</ecNumber>
    </recommendedName>
</protein>
<evidence type="ECO:0000255" key="1">
    <source>
        <dbReference type="HAMAP-Rule" id="MF_01066"/>
    </source>
</evidence>
<keyword id="KW-0012">Acyltransferase</keyword>
<keyword id="KW-1003">Cell membrane</keyword>
<keyword id="KW-0472">Membrane</keyword>
<keyword id="KW-0808">Transferase</keyword>
<keyword id="KW-0812">Transmembrane</keyword>
<keyword id="KW-1133">Transmembrane helix</keyword>